<name>MURA_YERP3</name>
<evidence type="ECO:0000255" key="1">
    <source>
        <dbReference type="HAMAP-Rule" id="MF_00111"/>
    </source>
</evidence>
<sequence>MDKFRVQGRTRLSGEVTISGAKNAALPILFAALLAEEPVELQNVPKLKDIDTTIKLLSQLGTKIERNNGSVFVDASAVNEFCAPYDLVKTMRASIWALGPLVARFGQGQVSLPGGCAIGARPVDLHITGLEQLGAEIKLEEGYVKASVNGRLKGAHIVMDKVSVGATVTIMSAATLAEGTTVIENAAREPEIVDTANFLNTLGAKISGAGTDRITIEGVTRLGGGVYRVLPDRIETGTFLVAAAISGGKVVCRQTRPDTLDAVLAKLREAGADIEVGDDWISLDMQGKRPKAITFRTAPHPGFPTDMQAQFSLLNLVAEGTGVITETIFENRFMHVPELIRMGAHAEIESNTVICYGVEQLSGAQVMATDLRASASLVLAGCIAEGVTIVDRIYHIDRGYERIEDKLRALGAKIERVKGE</sequence>
<accession>A7FDW9</accession>
<keyword id="KW-0131">Cell cycle</keyword>
<keyword id="KW-0132">Cell division</keyword>
<keyword id="KW-0133">Cell shape</keyword>
<keyword id="KW-0961">Cell wall biogenesis/degradation</keyword>
<keyword id="KW-0963">Cytoplasm</keyword>
<keyword id="KW-0573">Peptidoglycan synthesis</keyword>
<keyword id="KW-0670">Pyruvate</keyword>
<keyword id="KW-0808">Transferase</keyword>
<reference key="1">
    <citation type="journal article" date="2007" name="PLoS Genet.">
        <title>The complete genome sequence of Yersinia pseudotuberculosis IP31758, the causative agent of Far East scarlet-like fever.</title>
        <authorList>
            <person name="Eppinger M."/>
            <person name="Rosovitz M.J."/>
            <person name="Fricke W.F."/>
            <person name="Rasko D.A."/>
            <person name="Kokorina G."/>
            <person name="Fayolle C."/>
            <person name="Lindler L.E."/>
            <person name="Carniel E."/>
            <person name="Ravel J."/>
        </authorList>
    </citation>
    <scope>NUCLEOTIDE SEQUENCE [LARGE SCALE GENOMIC DNA]</scope>
    <source>
        <strain>IP 31758</strain>
    </source>
</reference>
<protein>
    <recommendedName>
        <fullName evidence="1">UDP-N-acetylglucosamine 1-carboxyvinyltransferase</fullName>
        <ecNumber evidence="1">2.5.1.7</ecNumber>
    </recommendedName>
    <alternativeName>
        <fullName evidence="1">Enoylpyruvate transferase</fullName>
    </alternativeName>
    <alternativeName>
        <fullName evidence="1">UDP-N-acetylglucosamine enolpyruvyl transferase</fullName>
        <shortName evidence="1">EPT</shortName>
    </alternativeName>
</protein>
<organism>
    <name type="scientific">Yersinia pseudotuberculosis serotype O:1b (strain IP 31758)</name>
    <dbReference type="NCBI Taxonomy" id="349747"/>
    <lineage>
        <taxon>Bacteria</taxon>
        <taxon>Pseudomonadati</taxon>
        <taxon>Pseudomonadota</taxon>
        <taxon>Gammaproteobacteria</taxon>
        <taxon>Enterobacterales</taxon>
        <taxon>Yersiniaceae</taxon>
        <taxon>Yersinia</taxon>
    </lineage>
</organism>
<dbReference type="EC" id="2.5.1.7" evidence="1"/>
<dbReference type="EMBL" id="CP000720">
    <property type="protein sequence ID" value="ABS49505.1"/>
    <property type="molecule type" value="Genomic_DNA"/>
</dbReference>
<dbReference type="RefSeq" id="WP_002210127.1">
    <property type="nucleotide sequence ID" value="NC_009708.1"/>
</dbReference>
<dbReference type="SMR" id="A7FDW9"/>
<dbReference type="GeneID" id="57975146"/>
<dbReference type="KEGG" id="ypi:YpsIP31758_0454"/>
<dbReference type="HOGENOM" id="CLU_027387_0_0_6"/>
<dbReference type="UniPathway" id="UPA00219"/>
<dbReference type="Proteomes" id="UP000002412">
    <property type="component" value="Chromosome"/>
</dbReference>
<dbReference type="GO" id="GO:0005737">
    <property type="term" value="C:cytoplasm"/>
    <property type="evidence" value="ECO:0007669"/>
    <property type="project" value="UniProtKB-SubCell"/>
</dbReference>
<dbReference type="GO" id="GO:0008760">
    <property type="term" value="F:UDP-N-acetylglucosamine 1-carboxyvinyltransferase activity"/>
    <property type="evidence" value="ECO:0007669"/>
    <property type="project" value="UniProtKB-UniRule"/>
</dbReference>
<dbReference type="GO" id="GO:0051301">
    <property type="term" value="P:cell division"/>
    <property type="evidence" value="ECO:0007669"/>
    <property type="project" value="UniProtKB-KW"/>
</dbReference>
<dbReference type="GO" id="GO:0071555">
    <property type="term" value="P:cell wall organization"/>
    <property type="evidence" value="ECO:0007669"/>
    <property type="project" value="UniProtKB-KW"/>
</dbReference>
<dbReference type="GO" id="GO:0009252">
    <property type="term" value="P:peptidoglycan biosynthetic process"/>
    <property type="evidence" value="ECO:0007669"/>
    <property type="project" value="UniProtKB-UniRule"/>
</dbReference>
<dbReference type="GO" id="GO:0008360">
    <property type="term" value="P:regulation of cell shape"/>
    <property type="evidence" value="ECO:0007669"/>
    <property type="project" value="UniProtKB-KW"/>
</dbReference>
<dbReference type="GO" id="GO:0019277">
    <property type="term" value="P:UDP-N-acetylgalactosamine biosynthetic process"/>
    <property type="evidence" value="ECO:0007669"/>
    <property type="project" value="InterPro"/>
</dbReference>
<dbReference type="CDD" id="cd01555">
    <property type="entry name" value="UdpNAET"/>
    <property type="match status" value="1"/>
</dbReference>
<dbReference type="FunFam" id="3.65.10.10:FF:000002">
    <property type="entry name" value="UDP-N-acetylglucosamine 1-carboxyvinyltransferase"/>
    <property type="match status" value="1"/>
</dbReference>
<dbReference type="Gene3D" id="3.65.10.10">
    <property type="entry name" value="Enolpyruvate transferase domain"/>
    <property type="match status" value="2"/>
</dbReference>
<dbReference type="HAMAP" id="MF_00111">
    <property type="entry name" value="MurA"/>
    <property type="match status" value="1"/>
</dbReference>
<dbReference type="InterPro" id="IPR001986">
    <property type="entry name" value="Enolpyruvate_Tfrase_dom"/>
</dbReference>
<dbReference type="InterPro" id="IPR036968">
    <property type="entry name" value="Enolpyruvate_Tfrase_sf"/>
</dbReference>
<dbReference type="InterPro" id="IPR050068">
    <property type="entry name" value="MurA_subfamily"/>
</dbReference>
<dbReference type="InterPro" id="IPR013792">
    <property type="entry name" value="RNA3'P_cycl/enolpyr_Trfase_a/b"/>
</dbReference>
<dbReference type="InterPro" id="IPR005750">
    <property type="entry name" value="UDP_GlcNAc_COvinyl_MurA"/>
</dbReference>
<dbReference type="NCBIfam" id="TIGR01072">
    <property type="entry name" value="murA"/>
    <property type="match status" value="1"/>
</dbReference>
<dbReference type="NCBIfam" id="NF006873">
    <property type="entry name" value="PRK09369.1"/>
    <property type="match status" value="1"/>
</dbReference>
<dbReference type="PANTHER" id="PTHR43783">
    <property type="entry name" value="UDP-N-ACETYLGLUCOSAMINE 1-CARBOXYVINYLTRANSFERASE"/>
    <property type="match status" value="1"/>
</dbReference>
<dbReference type="PANTHER" id="PTHR43783:SF1">
    <property type="entry name" value="UDP-N-ACETYLGLUCOSAMINE 1-CARBOXYVINYLTRANSFERASE"/>
    <property type="match status" value="1"/>
</dbReference>
<dbReference type="Pfam" id="PF00275">
    <property type="entry name" value="EPSP_synthase"/>
    <property type="match status" value="1"/>
</dbReference>
<dbReference type="SUPFAM" id="SSF55205">
    <property type="entry name" value="EPT/RTPC-like"/>
    <property type="match status" value="1"/>
</dbReference>
<feature type="chain" id="PRO_1000057735" description="UDP-N-acetylglucosamine 1-carboxyvinyltransferase">
    <location>
        <begin position="1"/>
        <end position="420"/>
    </location>
</feature>
<feature type="active site" description="Proton donor" evidence="1">
    <location>
        <position position="116"/>
    </location>
</feature>
<feature type="binding site" evidence="1">
    <location>
        <begin position="22"/>
        <end position="23"/>
    </location>
    <ligand>
        <name>phosphoenolpyruvate</name>
        <dbReference type="ChEBI" id="CHEBI:58702"/>
    </ligand>
</feature>
<feature type="binding site" evidence="1">
    <location>
        <position position="92"/>
    </location>
    <ligand>
        <name>UDP-N-acetyl-alpha-D-glucosamine</name>
        <dbReference type="ChEBI" id="CHEBI:57705"/>
    </ligand>
</feature>
<feature type="binding site" evidence="1">
    <location>
        <begin position="121"/>
        <end position="125"/>
    </location>
    <ligand>
        <name>UDP-N-acetyl-alpha-D-glucosamine</name>
        <dbReference type="ChEBI" id="CHEBI:57705"/>
    </ligand>
</feature>
<feature type="binding site" evidence="1">
    <location>
        <begin position="161"/>
        <end position="164"/>
    </location>
    <ligand>
        <name>UDP-N-acetyl-alpha-D-glucosamine</name>
        <dbReference type="ChEBI" id="CHEBI:57705"/>
    </ligand>
</feature>
<feature type="binding site" evidence="1">
    <location>
        <position position="306"/>
    </location>
    <ligand>
        <name>UDP-N-acetyl-alpha-D-glucosamine</name>
        <dbReference type="ChEBI" id="CHEBI:57705"/>
    </ligand>
</feature>
<feature type="binding site" evidence="1">
    <location>
        <position position="328"/>
    </location>
    <ligand>
        <name>UDP-N-acetyl-alpha-D-glucosamine</name>
        <dbReference type="ChEBI" id="CHEBI:57705"/>
    </ligand>
</feature>
<feature type="modified residue" description="2-(S-cysteinyl)pyruvic acid O-phosphothioketal" evidence="1">
    <location>
        <position position="116"/>
    </location>
</feature>
<proteinExistence type="inferred from homology"/>
<gene>
    <name evidence="1" type="primary">murA</name>
    <name type="ordered locus">YpsIP31758_0454</name>
</gene>
<comment type="function">
    <text evidence="1">Cell wall formation. Adds enolpyruvyl to UDP-N-acetylglucosamine.</text>
</comment>
<comment type="catalytic activity">
    <reaction evidence="1">
        <text>phosphoenolpyruvate + UDP-N-acetyl-alpha-D-glucosamine = UDP-N-acetyl-3-O-(1-carboxyvinyl)-alpha-D-glucosamine + phosphate</text>
        <dbReference type="Rhea" id="RHEA:18681"/>
        <dbReference type="ChEBI" id="CHEBI:43474"/>
        <dbReference type="ChEBI" id="CHEBI:57705"/>
        <dbReference type="ChEBI" id="CHEBI:58702"/>
        <dbReference type="ChEBI" id="CHEBI:68483"/>
        <dbReference type="EC" id="2.5.1.7"/>
    </reaction>
</comment>
<comment type="pathway">
    <text evidence="1">Cell wall biogenesis; peptidoglycan biosynthesis.</text>
</comment>
<comment type="subcellular location">
    <subcellularLocation>
        <location evidence="1">Cytoplasm</location>
    </subcellularLocation>
</comment>
<comment type="similarity">
    <text evidence="1">Belongs to the EPSP synthase family. MurA subfamily.</text>
</comment>